<dbReference type="EMBL" id="AY911262">
    <property type="protein sequence ID" value="AAX23992.1"/>
    <property type="molecule type" value="Genomic_RNA"/>
</dbReference>
<dbReference type="EMBL" id="KF713490">
    <property type="protein sequence ID" value="AHC94761.1"/>
    <property type="molecule type" value="Viral_cRNA"/>
</dbReference>
<dbReference type="EMBL" id="KF713491">
    <property type="protein sequence ID" value="AHC94773.1"/>
    <property type="molecule type" value="Viral_cRNA"/>
</dbReference>
<dbReference type="EMBL" id="KF713492">
    <property type="protein sequence ID" value="AHC94785.1"/>
    <property type="molecule type" value="Viral_cRNA"/>
</dbReference>
<dbReference type="EMBL" id="KX348546">
    <property type="protein sequence ID" value="API65186.1"/>
    <property type="molecule type" value="Genomic_RNA"/>
</dbReference>
<dbReference type="EMBL" id="MK810782">
    <property type="protein sequence ID" value="QFX69110.1"/>
    <property type="molecule type" value="Genomic_RNA"/>
</dbReference>
<dbReference type="EMBL" id="MK816924">
    <property type="protein sequence ID" value="QFX69122.1"/>
    <property type="molecule type" value="Genomic_RNA"/>
</dbReference>
<dbReference type="EMBL" id="MW039343">
    <property type="protein sequence ID" value="QPB74362.1"/>
    <property type="molecule type" value="Viral_cRNA"/>
</dbReference>
<dbReference type="EMBL" id="MT994242">
    <property type="protein sequence ID" value="QXO84939.1"/>
    <property type="molecule type" value="Genomic_RNA"/>
</dbReference>
<dbReference type="EMBL" id="MT994243">
    <property type="protein sequence ID" value="QXO84950.1"/>
    <property type="molecule type" value="Genomic_RNA"/>
</dbReference>
<dbReference type="SMR" id="Q4KRW6"/>
<dbReference type="Proteomes" id="UP000119304">
    <property type="component" value="Genome"/>
</dbReference>
<dbReference type="Proteomes" id="UP000130886">
    <property type="component" value="Genome"/>
</dbReference>
<dbReference type="Proteomes" id="UP000158141">
    <property type="component" value="Genome"/>
</dbReference>
<dbReference type="Proteomes" id="UP000163705">
    <property type="component" value="Genome"/>
</dbReference>
<dbReference type="GO" id="GO:0044167">
    <property type="term" value="C:host cell endoplasmic reticulum membrane"/>
    <property type="evidence" value="ECO:0007669"/>
    <property type="project" value="UniProtKB-SubCell"/>
</dbReference>
<dbReference type="GO" id="GO:0044178">
    <property type="term" value="C:host cell Golgi membrane"/>
    <property type="evidence" value="ECO:0007669"/>
    <property type="project" value="UniProtKB-SubCell"/>
</dbReference>
<dbReference type="GO" id="GO:0020002">
    <property type="term" value="C:host cell plasma membrane"/>
    <property type="evidence" value="ECO:0007669"/>
    <property type="project" value="UniProtKB-SubCell"/>
</dbReference>
<dbReference type="GO" id="GO:0016020">
    <property type="term" value="C:membrane"/>
    <property type="evidence" value="ECO:0007669"/>
    <property type="project" value="UniProtKB-KW"/>
</dbReference>
<dbReference type="GO" id="GO:0055036">
    <property type="term" value="C:virion membrane"/>
    <property type="evidence" value="ECO:0007669"/>
    <property type="project" value="UniProtKB-SubCell"/>
</dbReference>
<dbReference type="GO" id="GO:0015267">
    <property type="term" value="F:channel activity"/>
    <property type="evidence" value="ECO:0007669"/>
    <property type="project" value="UniProtKB-KW"/>
</dbReference>
<dbReference type="GO" id="GO:0034220">
    <property type="term" value="P:monoatomic ion transmembrane transport"/>
    <property type="evidence" value="ECO:0007669"/>
    <property type="project" value="UniProtKB-KW"/>
</dbReference>
<dbReference type="GO" id="GO:0052151">
    <property type="term" value="P:symbiont-mediated activation of host apoptosis"/>
    <property type="evidence" value="ECO:0007669"/>
    <property type="project" value="UniProtKB-KW"/>
</dbReference>
<dbReference type="InterPro" id="IPR005327">
    <property type="entry name" value="SHP"/>
</dbReference>
<dbReference type="Pfam" id="PF03579">
    <property type="entry name" value="SHP"/>
    <property type="match status" value="1"/>
</dbReference>
<evidence type="ECO:0000250" key="1">
    <source>
        <dbReference type="UniProtKB" id="P0DOE5"/>
    </source>
</evidence>
<evidence type="ECO:0000255" key="2"/>
<evidence type="ECO:0000305" key="3"/>
<organismHost>
    <name type="scientific">Homo sapiens</name>
    <name type="common">Human</name>
    <dbReference type="NCBI Taxonomy" id="9606"/>
</organismHost>
<proteinExistence type="inferred from homology"/>
<accession>Q4KRW6</accession>
<reference key="1">
    <citation type="journal article" date="2005" name="J. Virol.">
        <title>Respiratory syncytial virus nonstructural proteins NS1 and NS2 mediate inhibition of Stat2 expression and alpha/beta interferon responsiveness.</title>
        <authorList>
            <person name="Lo M.S."/>
            <person name="Brazas R.M."/>
            <person name="Holtzman M.J."/>
        </authorList>
    </citation>
    <scope>NUCLEOTIDE SEQUENCE [LARGE SCALE GENOMIC RNA]</scope>
    <source>
        <strain>ATCC VR-26</strain>
    </source>
</reference>
<reference key="2">
    <citation type="journal article" date="2019" name="Sci. Rep.">
        <title>The Interactome analysis of the Respiratory Syncytial Virus protein M2-1 suggests a new role in viral mRNA metabolism post-transcription.</title>
        <authorList>
            <person name="Bouillier C."/>
            <person name="Cosentino G."/>
            <person name="Leger T."/>
            <person name="Rincheval V."/>
            <person name="Richard C.A."/>
            <person name="Desquesnes A."/>
            <person name="Sitterlin D."/>
            <person name="Blouquit-Laye S."/>
            <person name="Eleouet J.F."/>
            <person name="Gault E."/>
            <person name="Rameix-Welti M.A."/>
        </authorList>
    </citation>
    <scope>NUCLEOTIDE SEQUENCE [GENOMIC RNA]</scope>
</reference>
<reference key="3">
    <citation type="journal article" date="2021" name="Nature">
        <title>A condensate-hardening drug blocks RSV replication in vivo.</title>
        <authorList>
            <person name="Risso-Ballester J."/>
            <person name="Galloux M."/>
            <person name="Cao J."/>
            <person name="Le Goffic R."/>
            <person name="Hontonnou F."/>
            <person name="Jobart-Malfait A."/>
            <person name="Desquesnes A."/>
            <person name="Sake S.M."/>
            <person name="Haid S."/>
            <person name="Du M."/>
            <person name="Zhang X."/>
            <person name="Zhang H."/>
            <person name="Wang Z."/>
            <person name="Rincheval V."/>
            <person name="Zhang Y."/>
            <person name="Pietschmann T."/>
            <person name="Eleouet J.F."/>
            <person name="Rameix-Welti M.A."/>
            <person name="Altmeyer R."/>
        </authorList>
    </citation>
    <scope>NUCLEOTIDE SEQUENCE [GENOMIC RNA]</scope>
    <source>
        <strain>Recombinant hRSV-P-BFP</strain>
    </source>
</reference>
<gene>
    <name type="primary">SH</name>
</gene>
<organism>
    <name type="scientific">Human respiratory syncytial virus</name>
    <dbReference type="NCBI Taxonomy" id="11250"/>
    <lineage>
        <taxon>Viruses</taxon>
        <taxon>Riboviria</taxon>
        <taxon>Orthornavirae</taxon>
        <taxon>Negarnaviricota</taxon>
        <taxon>Haploviricotina</taxon>
        <taxon>Monjiviricetes</taxon>
        <taxon>Mononegavirales</taxon>
        <taxon>Pneumoviridae</taxon>
        <taxon>Orthopneumovirus</taxon>
        <taxon>Orthopneumovirus hominis</taxon>
    </lineage>
</organism>
<feature type="chain" id="PRO_0000458094" description="Small hydrophobic protein">
    <location>
        <begin position="1"/>
        <end position="64"/>
    </location>
</feature>
<feature type="transmembrane region" description="Helical" evidence="2">
    <location>
        <begin position="20"/>
        <end position="40"/>
    </location>
</feature>
<feature type="region of interest" description="Interaction with host BCAP31" evidence="1">
    <location>
        <begin position="6"/>
        <end position="15"/>
    </location>
</feature>
<feature type="region of interest" description="Interaction with small-molecule inhibitor" evidence="1">
    <location>
        <begin position="38"/>
        <end position="43"/>
    </location>
</feature>
<feature type="site" description="Involved in opening and closing mechanism of the pentameric structure" evidence="1">
    <location>
        <position position="22"/>
    </location>
</feature>
<feature type="site" description="Involved in opening and closing mechanism of the pentameric structure" evidence="1">
    <location>
        <position position="51"/>
    </location>
</feature>
<feature type="glycosylation site" description="N-linked (GlcNAc...) asparagine; by host" evidence="2">
    <location>
        <position position="52"/>
    </location>
</feature>
<comment type="function">
    <text evidence="1">Viroporin that forms a homopentameric ion channel displaying low ion selectivity. May play a role in virus morphogenesis and pathogenicity at various stages of the viral life cycle. Accumulates at the membrane of the Golgi apparatus in infected cells and may facilitate virus release by modifying the secretory pathway. May enhance host membrane permeability and disrupt cellular ion homeostasis, which can be sensed as damage-associated molecular patterns/danger signals, triggering NLRP3 inflammasome activation and inflammatory immune response. Also inhibits host TNFA-mediated signaling pathway and may delay apoptosis, allowing time for the virus to replicate.</text>
</comment>
<comment type="activity regulation">
    <text evidence="1">Channel activity is inhibited by copper. Also inhibited by small-molecule pyronin B.</text>
</comment>
<comment type="subunit">
    <text evidence="1">Homopentamer forming a funnel-like pore. Interacts with glycoprotein G; this interaction occurs on the surface of virion particles and infected cells. Interacts with host BCAP31 (via C-terminus); this interaction is direct.</text>
</comment>
<comment type="subcellular location">
    <subcellularLocation>
        <location evidence="1">Virion membrane</location>
        <topology evidence="1">Single-pass type II membrane protein</topology>
    </subcellularLocation>
    <subcellularLocation>
        <location evidence="1">Host cell membrane</location>
        <topology evidence="1">Single-pass type II membrane protein</topology>
    </subcellularLocation>
    <subcellularLocation>
        <location evidence="1">Host Golgi apparatus membrane</location>
        <topology evidence="1">Single-pass type II membrane protein</topology>
    </subcellularLocation>
    <subcellularLocation>
        <location evidence="1">Host endoplasmic reticulum membrane</location>
        <topology evidence="1">Single-pass type II membrane protein</topology>
    </subcellularLocation>
    <text evidence="1">Present in very small amount in the virion. Detected in lipid rafts of host Golgi apparatus membrane.</text>
</comment>
<comment type="PTM">
    <text evidence="1">Four species of SH have been detected in infected cell cytoplasm: a 7.5 kDa non-glycosylated form (SH0), a 13-15 kDa form that contains one or two N-linked carbohydrate side chains of the high-mannose type (SHg), a 21-30 kDa polylactosaminoglycan-modified form of the protein (SHp), and the isoform generated by alternative translational initiation. Of these different forms, SH0 is by far the most abundant protein detected during virus infection.</text>
</comment>
<comment type="PTM">
    <text evidence="1">Tyrosine phosphorylated.</text>
</comment>
<comment type="miscellaneous">
    <molecule>Small hydrophobic protein</molecule>
    <text evidence="1">Produced by alternative initiation at Met-23 of isoform SH and gives rise to a 4.6 kDa truncated form of the non-glycosylated protein.</text>
</comment>
<comment type="similarity">
    <text evidence="3">Belongs to the orthopneumovirus small hydrophobic protein family.</text>
</comment>
<name>SH_HRSV</name>
<sequence>MENTSITIEFSSKFWPYFTLIHMITTIISLLIIISIMTAILNKLCEYNVFHNKTFELPRARVNT</sequence>
<protein>
    <recommendedName>
        <fullName>Small hydrophobic protein</fullName>
    </recommendedName>
    <alternativeName>
        <fullName>Small protein 1A</fullName>
    </alternativeName>
</protein>
<keyword id="KW-1073">Activation of host caspases by virus</keyword>
<keyword id="KW-0325">Glycoprotein</keyword>
<keyword id="KW-1032">Host cell membrane</keyword>
<keyword id="KW-1038">Host endoplasmic reticulum</keyword>
<keyword id="KW-1040">Host Golgi apparatus</keyword>
<keyword id="KW-1043">Host membrane</keyword>
<keyword id="KW-0945">Host-virus interaction</keyword>
<keyword id="KW-0407">Ion channel</keyword>
<keyword id="KW-0406">Ion transport</keyword>
<keyword id="KW-0472">Membrane</keyword>
<keyword id="KW-1119">Modulation of host cell apoptosis by virus</keyword>
<keyword id="KW-0597">Phosphoprotein</keyword>
<keyword id="KW-0735">Signal-anchor</keyword>
<keyword id="KW-0812">Transmembrane</keyword>
<keyword id="KW-1133">Transmembrane helix</keyword>
<keyword id="KW-0813">Transport</keyword>
<keyword id="KW-1182">Viral ion channel</keyword>
<keyword id="KW-0946">Virion</keyword>